<dbReference type="EC" id="6.3.2.8" evidence="1"/>
<dbReference type="EMBL" id="CP000388">
    <property type="protein sequence ID" value="ABG42020.1"/>
    <property type="molecule type" value="Genomic_DNA"/>
</dbReference>
<dbReference type="RefSeq" id="WP_011576248.1">
    <property type="nucleotide sequence ID" value="NC_008228.1"/>
</dbReference>
<dbReference type="SMR" id="Q15Q18"/>
<dbReference type="STRING" id="342610.Patl_3518"/>
<dbReference type="KEGG" id="pat:Patl_3518"/>
<dbReference type="eggNOG" id="COG0773">
    <property type="taxonomic scope" value="Bacteria"/>
</dbReference>
<dbReference type="HOGENOM" id="CLU_028104_2_2_6"/>
<dbReference type="OrthoDB" id="9804126at2"/>
<dbReference type="UniPathway" id="UPA00219"/>
<dbReference type="Proteomes" id="UP000001981">
    <property type="component" value="Chromosome"/>
</dbReference>
<dbReference type="GO" id="GO:0005737">
    <property type="term" value="C:cytoplasm"/>
    <property type="evidence" value="ECO:0007669"/>
    <property type="project" value="UniProtKB-SubCell"/>
</dbReference>
<dbReference type="GO" id="GO:0005524">
    <property type="term" value="F:ATP binding"/>
    <property type="evidence" value="ECO:0007669"/>
    <property type="project" value="UniProtKB-UniRule"/>
</dbReference>
<dbReference type="GO" id="GO:0008763">
    <property type="term" value="F:UDP-N-acetylmuramate-L-alanine ligase activity"/>
    <property type="evidence" value="ECO:0007669"/>
    <property type="project" value="UniProtKB-UniRule"/>
</dbReference>
<dbReference type="GO" id="GO:0051301">
    <property type="term" value="P:cell division"/>
    <property type="evidence" value="ECO:0007669"/>
    <property type="project" value="UniProtKB-KW"/>
</dbReference>
<dbReference type="GO" id="GO:0071555">
    <property type="term" value="P:cell wall organization"/>
    <property type="evidence" value="ECO:0007669"/>
    <property type="project" value="UniProtKB-KW"/>
</dbReference>
<dbReference type="GO" id="GO:0009252">
    <property type="term" value="P:peptidoglycan biosynthetic process"/>
    <property type="evidence" value="ECO:0007669"/>
    <property type="project" value="UniProtKB-UniRule"/>
</dbReference>
<dbReference type="GO" id="GO:0008360">
    <property type="term" value="P:regulation of cell shape"/>
    <property type="evidence" value="ECO:0007669"/>
    <property type="project" value="UniProtKB-KW"/>
</dbReference>
<dbReference type="FunFam" id="3.40.1190.10:FF:000001">
    <property type="entry name" value="UDP-N-acetylmuramate--L-alanine ligase"/>
    <property type="match status" value="1"/>
</dbReference>
<dbReference type="FunFam" id="3.40.50.720:FF:000046">
    <property type="entry name" value="UDP-N-acetylmuramate--L-alanine ligase"/>
    <property type="match status" value="1"/>
</dbReference>
<dbReference type="Gene3D" id="3.90.190.20">
    <property type="entry name" value="Mur ligase, C-terminal domain"/>
    <property type="match status" value="1"/>
</dbReference>
<dbReference type="Gene3D" id="3.40.1190.10">
    <property type="entry name" value="Mur-like, catalytic domain"/>
    <property type="match status" value="1"/>
</dbReference>
<dbReference type="Gene3D" id="3.40.50.720">
    <property type="entry name" value="NAD(P)-binding Rossmann-like Domain"/>
    <property type="match status" value="1"/>
</dbReference>
<dbReference type="HAMAP" id="MF_00046">
    <property type="entry name" value="MurC"/>
    <property type="match status" value="1"/>
</dbReference>
<dbReference type="InterPro" id="IPR036565">
    <property type="entry name" value="Mur-like_cat_sf"/>
</dbReference>
<dbReference type="InterPro" id="IPR004101">
    <property type="entry name" value="Mur_ligase_C"/>
</dbReference>
<dbReference type="InterPro" id="IPR036615">
    <property type="entry name" value="Mur_ligase_C_dom_sf"/>
</dbReference>
<dbReference type="InterPro" id="IPR013221">
    <property type="entry name" value="Mur_ligase_cen"/>
</dbReference>
<dbReference type="InterPro" id="IPR000713">
    <property type="entry name" value="Mur_ligase_N"/>
</dbReference>
<dbReference type="InterPro" id="IPR050061">
    <property type="entry name" value="MurCDEF_pg_biosynth"/>
</dbReference>
<dbReference type="InterPro" id="IPR005758">
    <property type="entry name" value="UDP-N-AcMur_Ala_ligase_MurC"/>
</dbReference>
<dbReference type="NCBIfam" id="TIGR01082">
    <property type="entry name" value="murC"/>
    <property type="match status" value="1"/>
</dbReference>
<dbReference type="PANTHER" id="PTHR43445:SF3">
    <property type="entry name" value="UDP-N-ACETYLMURAMATE--L-ALANINE LIGASE"/>
    <property type="match status" value="1"/>
</dbReference>
<dbReference type="PANTHER" id="PTHR43445">
    <property type="entry name" value="UDP-N-ACETYLMURAMATE--L-ALANINE LIGASE-RELATED"/>
    <property type="match status" value="1"/>
</dbReference>
<dbReference type="Pfam" id="PF01225">
    <property type="entry name" value="Mur_ligase"/>
    <property type="match status" value="1"/>
</dbReference>
<dbReference type="Pfam" id="PF02875">
    <property type="entry name" value="Mur_ligase_C"/>
    <property type="match status" value="1"/>
</dbReference>
<dbReference type="Pfam" id="PF08245">
    <property type="entry name" value="Mur_ligase_M"/>
    <property type="match status" value="1"/>
</dbReference>
<dbReference type="SUPFAM" id="SSF51984">
    <property type="entry name" value="MurCD N-terminal domain"/>
    <property type="match status" value="1"/>
</dbReference>
<dbReference type="SUPFAM" id="SSF53623">
    <property type="entry name" value="MurD-like peptide ligases, catalytic domain"/>
    <property type="match status" value="1"/>
</dbReference>
<dbReference type="SUPFAM" id="SSF53244">
    <property type="entry name" value="MurD-like peptide ligases, peptide-binding domain"/>
    <property type="match status" value="1"/>
</dbReference>
<comment type="function">
    <text evidence="1">Cell wall formation.</text>
</comment>
<comment type="catalytic activity">
    <reaction evidence="1">
        <text>UDP-N-acetyl-alpha-D-muramate + L-alanine + ATP = UDP-N-acetyl-alpha-D-muramoyl-L-alanine + ADP + phosphate + H(+)</text>
        <dbReference type="Rhea" id="RHEA:23372"/>
        <dbReference type="ChEBI" id="CHEBI:15378"/>
        <dbReference type="ChEBI" id="CHEBI:30616"/>
        <dbReference type="ChEBI" id="CHEBI:43474"/>
        <dbReference type="ChEBI" id="CHEBI:57972"/>
        <dbReference type="ChEBI" id="CHEBI:70757"/>
        <dbReference type="ChEBI" id="CHEBI:83898"/>
        <dbReference type="ChEBI" id="CHEBI:456216"/>
        <dbReference type="EC" id="6.3.2.8"/>
    </reaction>
</comment>
<comment type="pathway">
    <text evidence="1">Cell wall biogenesis; peptidoglycan biosynthesis.</text>
</comment>
<comment type="subcellular location">
    <subcellularLocation>
        <location evidence="1">Cytoplasm</location>
    </subcellularLocation>
</comment>
<comment type="similarity">
    <text evidence="1">Belongs to the MurCDEF family.</text>
</comment>
<gene>
    <name evidence="1" type="primary">murC</name>
    <name type="ordered locus">Patl_3518</name>
</gene>
<protein>
    <recommendedName>
        <fullName evidence="1">UDP-N-acetylmuramate--L-alanine ligase</fullName>
        <ecNumber evidence="1">6.3.2.8</ecNumber>
    </recommendedName>
    <alternativeName>
        <fullName evidence="1">UDP-N-acetylmuramoyl-L-alanine synthetase</fullName>
    </alternativeName>
</protein>
<evidence type="ECO:0000255" key="1">
    <source>
        <dbReference type="HAMAP-Rule" id="MF_00046"/>
    </source>
</evidence>
<accession>Q15Q18</accession>
<name>MURC_PSEA6</name>
<organism>
    <name type="scientific">Pseudoalteromonas atlantica (strain T6c / ATCC BAA-1087)</name>
    <dbReference type="NCBI Taxonomy" id="3042615"/>
    <lineage>
        <taxon>Bacteria</taxon>
        <taxon>Pseudomonadati</taxon>
        <taxon>Pseudomonadota</taxon>
        <taxon>Gammaproteobacteria</taxon>
        <taxon>Alteromonadales</taxon>
        <taxon>Alteromonadaceae</taxon>
        <taxon>Paraglaciecola</taxon>
    </lineage>
</organism>
<feature type="chain" id="PRO_0000336854" description="UDP-N-acetylmuramate--L-alanine ligase">
    <location>
        <begin position="1"/>
        <end position="484"/>
    </location>
</feature>
<feature type="binding site" evidence="1">
    <location>
        <begin position="124"/>
        <end position="130"/>
    </location>
    <ligand>
        <name>ATP</name>
        <dbReference type="ChEBI" id="CHEBI:30616"/>
    </ligand>
</feature>
<proteinExistence type="inferred from homology"/>
<keyword id="KW-0067">ATP-binding</keyword>
<keyword id="KW-0131">Cell cycle</keyword>
<keyword id="KW-0132">Cell division</keyword>
<keyword id="KW-0133">Cell shape</keyword>
<keyword id="KW-0961">Cell wall biogenesis/degradation</keyword>
<keyword id="KW-0963">Cytoplasm</keyword>
<keyword id="KW-0436">Ligase</keyword>
<keyword id="KW-0547">Nucleotide-binding</keyword>
<keyword id="KW-0573">Peptidoglycan synthesis</keyword>
<reference key="1">
    <citation type="submission" date="2006-06" db="EMBL/GenBank/DDBJ databases">
        <title>Complete sequence of Pseudoalteromonas atlantica T6c.</title>
        <authorList>
            <consortium name="US DOE Joint Genome Institute"/>
            <person name="Copeland A."/>
            <person name="Lucas S."/>
            <person name="Lapidus A."/>
            <person name="Barry K."/>
            <person name="Detter J.C."/>
            <person name="Glavina del Rio T."/>
            <person name="Hammon N."/>
            <person name="Israni S."/>
            <person name="Dalin E."/>
            <person name="Tice H."/>
            <person name="Pitluck S."/>
            <person name="Saunders E."/>
            <person name="Brettin T."/>
            <person name="Bruce D."/>
            <person name="Han C."/>
            <person name="Tapia R."/>
            <person name="Gilna P."/>
            <person name="Schmutz J."/>
            <person name="Larimer F."/>
            <person name="Land M."/>
            <person name="Hauser L."/>
            <person name="Kyrpides N."/>
            <person name="Kim E."/>
            <person name="Karls A.C."/>
            <person name="Bartlett D."/>
            <person name="Higgins B.P."/>
            <person name="Richardson P."/>
        </authorList>
    </citation>
    <scope>NUCLEOTIDE SEQUENCE [LARGE SCALE GENOMIC DNA]</scope>
    <source>
        <strain>T6c / ATCC BAA-1087</strain>
    </source>
</reference>
<sequence>MIAPDKVHYHVPEMRRIKNIHFVGIGGAGMGGIAEVLLNEGYQVSGSDRQANGMTDRLSGLGATIFFGHQASNVEKANVVVVSSAIDPTNPEVNAANEMRIPVIRRAEMLAELMRFRHGIAIAGTHGKTTTTSLIATIFAQAELDPTFVIGGLLNSAGTNARLGSSQYLIAEADESDASFVHLQPMVSVVTNIEPDHMETYQGDFQKMQDTYIDFLHNLPFYGLAVLCIDDPVITQLLPRIKRKYLTYGYSEVADVRATHVKHTFNQSEFTLKRKDHQDIQVVVNAPGKHNVLNALAAIAVATDENIEDAAITAALANFSGIGRRFEMLGEFATGEGDVLLVDDYGHHPTEVEATIAVARNNWPDRRLVMAYQPHRYSRTRDLYEDFVRVLSQVDVLLLLDVYSAGEEKIEGADSKSLCRSMRQRGQLEPIYVADKNELPKLLADNLKDQDILLTQGAGNIGQIAKELQEMKLDKGALRTGWSK</sequence>